<keyword id="KW-0687">Ribonucleoprotein</keyword>
<keyword id="KW-0689">Ribosomal protein</keyword>
<keyword id="KW-0694">RNA-binding</keyword>
<keyword id="KW-0699">rRNA-binding</keyword>
<name>RL15_PSE14</name>
<proteinExistence type="inferred from homology"/>
<dbReference type="EMBL" id="CP000058">
    <property type="protein sequence ID" value="AAZ33941.1"/>
    <property type="molecule type" value="Genomic_DNA"/>
</dbReference>
<dbReference type="RefSeq" id="WP_002555470.1">
    <property type="nucleotide sequence ID" value="NC_005773.3"/>
</dbReference>
<dbReference type="SMR" id="Q48D55"/>
<dbReference type="GeneID" id="96221011"/>
<dbReference type="KEGG" id="psp:PSPPH_4573"/>
<dbReference type="eggNOG" id="COG0200">
    <property type="taxonomic scope" value="Bacteria"/>
</dbReference>
<dbReference type="HOGENOM" id="CLU_055188_4_2_6"/>
<dbReference type="Proteomes" id="UP000000551">
    <property type="component" value="Chromosome"/>
</dbReference>
<dbReference type="GO" id="GO:0022625">
    <property type="term" value="C:cytosolic large ribosomal subunit"/>
    <property type="evidence" value="ECO:0007669"/>
    <property type="project" value="TreeGrafter"/>
</dbReference>
<dbReference type="GO" id="GO:0019843">
    <property type="term" value="F:rRNA binding"/>
    <property type="evidence" value="ECO:0007669"/>
    <property type="project" value="UniProtKB-UniRule"/>
</dbReference>
<dbReference type="GO" id="GO:0003735">
    <property type="term" value="F:structural constituent of ribosome"/>
    <property type="evidence" value="ECO:0007669"/>
    <property type="project" value="InterPro"/>
</dbReference>
<dbReference type="GO" id="GO:0006412">
    <property type="term" value="P:translation"/>
    <property type="evidence" value="ECO:0007669"/>
    <property type="project" value="UniProtKB-UniRule"/>
</dbReference>
<dbReference type="Gene3D" id="3.100.10.10">
    <property type="match status" value="1"/>
</dbReference>
<dbReference type="HAMAP" id="MF_01341">
    <property type="entry name" value="Ribosomal_uL15"/>
    <property type="match status" value="1"/>
</dbReference>
<dbReference type="InterPro" id="IPR030878">
    <property type="entry name" value="Ribosomal_uL15"/>
</dbReference>
<dbReference type="InterPro" id="IPR021131">
    <property type="entry name" value="Ribosomal_uL15/eL18"/>
</dbReference>
<dbReference type="InterPro" id="IPR036227">
    <property type="entry name" value="Ribosomal_uL15/eL18_sf"/>
</dbReference>
<dbReference type="InterPro" id="IPR005749">
    <property type="entry name" value="Ribosomal_uL15_bac-type"/>
</dbReference>
<dbReference type="InterPro" id="IPR001196">
    <property type="entry name" value="Ribosomal_uL15_CS"/>
</dbReference>
<dbReference type="NCBIfam" id="TIGR01071">
    <property type="entry name" value="rplO_bact"/>
    <property type="match status" value="1"/>
</dbReference>
<dbReference type="PANTHER" id="PTHR12934">
    <property type="entry name" value="50S RIBOSOMAL PROTEIN L15"/>
    <property type="match status" value="1"/>
</dbReference>
<dbReference type="PANTHER" id="PTHR12934:SF11">
    <property type="entry name" value="LARGE RIBOSOMAL SUBUNIT PROTEIN UL15M"/>
    <property type="match status" value="1"/>
</dbReference>
<dbReference type="Pfam" id="PF00828">
    <property type="entry name" value="Ribosomal_L27A"/>
    <property type="match status" value="1"/>
</dbReference>
<dbReference type="SUPFAM" id="SSF52080">
    <property type="entry name" value="Ribosomal proteins L15p and L18e"/>
    <property type="match status" value="1"/>
</dbReference>
<dbReference type="PROSITE" id="PS00475">
    <property type="entry name" value="RIBOSOMAL_L15"/>
    <property type="match status" value="1"/>
</dbReference>
<organism>
    <name type="scientific">Pseudomonas savastanoi pv. phaseolicola (strain 1448A / Race 6)</name>
    <name type="common">Pseudomonas syringae pv. phaseolicola (strain 1448A / Race 6)</name>
    <dbReference type="NCBI Taxonomy" id="264730"/>
    <lineage>
        <taxon>Bacteria</taxon>
        <taxon>Pseudomonadati</taxon>
        <taxon>Pseudomonadota</taxon>
        <taxon>Gammaproteobacteria</taxon>
        <taxon>Pseudomonadales</taxon>
        <taxon>Pseudomonadaceae</taxon>
        <taxon>Pseudomonas</taxon>
    </lineage>
</organism>
<accession>Q48D55</accession>
<evidence type="ECO:0000255" key="1">
    <source>
        <dbReference type="HAMAP-Rule" id="MF_01341"/>
    </source>
</evidence>
<evidence type="ECO:0000256" key="2">
    <source>
        <dbReference type="SAM" id="MobiDB-lite"/>
    </source>
</evidence>
<evidence type="ECO:0000305" key="3"/>
<protein>
    <recommendedName>
        <fullName evidence="1">Large ribosomal subunit protein uL15</fullName>
    </recommendedName>
    <alternativeName>
        <fullName evidence="3">50S ribosomal protein L15</fullName>
    </alternativeName>
</protein>
<sequence length="144" mass="15166">MKLNDLSPAPGSRREKHRPGRGIGSGLGKTGGRGHKGQSSRSGGTIAPGFEGGQQPLHRRLPKFGFVSLKAMDRAEVRLSELAKVEGDIVTVQSLKDANVINQNVQRVKIMLSGEVTRAVTIKGIAATKGARAAIEAAGGKFEE</sequence>
<reference key="1">
    <citation type="journal article" date="2005" name="J. Bacteriol.">
        <title>Whole-genome sequence analysis of Pseudomonas syringae pv. phaseolicola 1448A reveals divergence among pathovars in genes involved in virulence and transposition.</title>
        <authorList>
            <person name="Joardar V."/>
            <person name="Lindeberg M."/>
            <person name="Jackson R.W."/>
            <person name="Selengut J."/>
            <person name="Dodson R."/>
            <person name="Brinkac L.M."/>
            <person name="Daugherty S.C."/>
            <person name="DeBoy R.T."/>
            <person name="Durkin A.S."/>
            <person name="Gwinn Giglio M."/>
            <person name="Madupu R."/>
            <person name="Nelson W.C."/>
            <person name="Rosovitz M.J."/>
            <person name="Sullivan S.A."/>
            <person name="Crabtree J."/>
            <person name="Creasy T."/>
            <person name="Davidsen T.M."/>
            <person name="Haft D.H."/>
            <person name="Zafar N."/>
            <person name="Zhou L."/>
            <person name="Halpin R."/>
            <person name="Holley T."/>
            <person name="Khouri H.M."/>
            <person name="Feldblyum T.V."/>
            <person name="White O."/>
            <person name="Fraser C.M."/>
            <person name="Chatterjee A.K."/>
            <person name="Cartinhour S."/>
            <person name="Schneider D."/>
            <person name="Mansfield J.W."/>
            <person name="Collmer A."/>
            <person name="Buell R."/>
        </authorList>
    </citation>
    <scope>NUCLEOTIDE SEQUENCE [LARGE SCALE GENOMIC DNA]</scope>
    <source>
        <strain>1448A / Race 6</strain>
    </source>
</reference>
<comment type="function">
    <text evidence="1">Binds to the 23S rRNA.</text>
</comment>
<comment type="subunit">
    <text evidence="1">Part of the 50S ribosomal subunit.</text>
</comment>
<comment type="similarity">
    <text evidence="1">Belongs to the universal ribosomal protein uL15 family.</text>
</comment>
<feature type="chain" id="PRO_0000104785" description="Large ribosomal subunit protein uL15">
    <location>
        <begin position="1"/>
        <end position="144"/>
    </location>
</feature>
<feature type="region of interest" description="Disordered" evidence="2">
    <location>
        <begin position="1"/>
        <end position="57"/>
    </location>
</feature>
<feature type="compositionally biased region" description="Gly residues" evidence="2">
    <location>
        <begin position="21"/>
        <end position="31"/>
    </location>
</feature>
<gene>
    <name evidence="1" type="primary">rplO</name>
    <name type="ordered locus">PSPPH_4573</name>
</gene>